<organism>
    <name type="scientific">Rickettsia peacockii (strain Rustic)</name>
    <dbReference type="NCBI Taxonomy" id="562019"/>
    <lineage>
        <taxon>Bacteria</taxon>
        <taxon>Pseudomonadati</taxon>
        <taxon>Pseudomonadota</taxon>
        <taxon>Alphaproteobacteria</taxon>
        <taxon>Rickettsiales</taxon>
        <taxon>Rickettsiaceae</taxon>
        <taxon>Rickettsieae</taxon>
        <taxon>Rickettsia</taxon>
        <taxon>spotted fever group</taxon>
    </lineage>
</organism>
<gene>
    <name evidence="1" type="primary">dapF</name>
    <name type="ordered locus">RPR_05640</name>
</gene>
<name>DAPF_RICPU</name>
<comment type="function">
    <text evidence="1">Catalyzes the stereoinversion of LL-2,6-diaminopimelate (L,L-DAP) to meso-diaminopimelate (meso-DAP), a precursor of L-lysine and an essential component of the bacterial peptidoglycan.</text>
</comment>
<comment type="catalytic activity">
    <reaction evidence="1">
        <text>(2S,6S)-2,6-diaminopimelate = meso-2,6-diaminopimelate</text>
        <dbReference type="Rhea" id="RHEA:15393"/>
        <dbReference type="ChEBI" id="CHEBI:57609"/>
        <dbReference type="ChEBI" id="CHEBI:57791"/>
        <dbReference type="EC" id="5.1.1.7"/>
    </reaction>
</comment>
<comment type="pathway">
    <text evidence="1">Amino-acid biosynthesis; L-lysine biosynthesis via DAP pathway; DL-2,6-diaminopimelate from LL-2,6-diaminopimelate: step 1/1.</text>
</comment>
<comment type="subunit">
    <text evidence="1">Homodimer.</text>
</comment>
<comment type="subcellular location">
    <subcellularLocation>
        <location evidence="1">Cytoplasm</location>
    </subcellularLocation>
</comment>
<comment type="similarity">
    <text evidence="1">Belongs to the diaminopimelate epimerase family.</text>
</comment>
<feature type="chain" id="PRO_1000204067" description="Diaminopimelate epimerase">
    <location>
        <begin position="1"/>
        <end position="270"/>
    </location>
</feature>
<feature type="active site" description="Proton donor" evidence="1">
    <location>
        <position position="75"/>
    </location>
</feature>
<feature type="active site" description="Proton acceptor" evidence="1">
    <location>
        <position position="213"/>
    </location>
</feature>
<feature type="binding site" evidence="1">
    <location>
        <position position="15"/>
    </location>
    <ligand>
        <name>substrate</name>
    </ligand>
</feature>
<feature type="binding site" evidence="1">
    <location>
        <position position="49"/>
    </location>
    <ligand>
        <name>substrate</name>
    </ligand>
</feature>
<feature type="binding site" evidence="1">
    <location>
        <position position="66"/>
    </location>
    <ligand>
        <name>substrate</name>
    </ligand>
</feature>
<feature type="binding site" evidence="1">
    <location>
        <begin position="76"/>
        <end position="77"/>
    </location>
    <ligand>
        <name>substrate</name>
    </ligand>
</feature>
<feature type="binding site" evidence="1">
    <location>
        <position position="155"/>
    </location>
    <ligand>
        <name>substrate</name>
    </ligand>
</feature>
<feature type="binding site" evidence="1">
    <location>
        <position position="187"/>
    </location>
    <ligand>
        <name>substrate</name>
    </ligand>
</feature>
<feature type="binding site" evidence="1">
    <location>
        <begin position="204"/>
        <end position="205"/>
    </location>
    <ligand>
        <name>substrate</name>
    </ligand>
</feature>
<feature type="binding site" evidence="1">
    <location>
        <begin position="214"/>
        <end position="215"/>
    </location>
    <ligand>
        <name>substrate</name>
    </ligand>
</feature>
<feature type="site" description="Could be important to modulate the pK values of the two catalytic cysteine residues" evidence="1">
    <location>
        <position position="157"/>
    </location>
</feature>
<feature type="site" description="Could be important to modulate the pK values of the two catalytic cysteine residues" evidence="1">
    <location>
        <position position="204"/>
    </location>
</feature>
<dbReference type="EC" id="5.1.1.7" evidence="1"/>
<dbReference type="EMBL" id="CP001227">
    <property type="protein sequence ID" value="ACR47700.1"/>
    <property type="molecule type" value="Genomic_DNA"/>
</dbReference>
<dbReference type="RefSeq" id="WP_010977213.1">
    <property type="nucleotide sequence ID" value="NC_012730.1"/>
</dbReference>
<dbReference type="SMR" id="C4K2A3"/>
<dbReference type="GeneID" id="927681"/>
<dbReference type="KEGG" id="rpk:RPR_05640"/>
<dbReference type="HOGENOM" id="CLU_053306_1_0_5"/>
<dbReference type="UniPathway" id="UPA00034">
    <property type="reaction ID" value="UER00025"/>
</dbReference>
<dbReference type="Proteomes" id="UP000005015">
    <property type="component" value="Chromosome"/>
</dbReference>
<dbReference type="GO" id="GO:0005829">
    <property type="term" value="C:cytosol"/>
    <property type="evidence" value="ECO:0007669"/>
    <property type="project" value="TreeGrafter"/>
</dbReference>
<dbReference type="GO" id="GO:0008837">
    <property type="term" value="F:diaminopimelate epimerase activity"/>
    <property type="evidence" value="ECO:0007669"/>
    <property type="project" value="UniProtKB-UniRule"/>
</dbReference>
<dbReference type="GO" id="GO:0009089">
    <property type="term" value="P:lysine biosynthetic process via diaminopimelate"/>
    <property type="evidence" value="ECO:0007669"/>
    <property type="project" value="UniProtKB-UniRule"/>
</dbReference>
<dbReference type="Gene3D" id="3.10.310.10">
    <property type="entry name" value="Diaminopimelate Epimerase, Chain A, domain 1"/>
    <property type="match status" value="2"/>
</dbReference>
<dbReference type="HAMAP" id="MF_00197">
    <property type="entry name" value="DAP_epimerase"/>
    <property type="match status" value="1"/>
</dbReference>
<dbReference type="InterPro" id="IPR018510">
    <property type="entry name" value="DAP_epimerase_AS"/>
</dbReference>
<dbReference type="InterPro" id="IPR001653">
    <property type="entry name" value="DAP_epimerase_DapF"/>
</dbReference>
<dbReference type="NCBIfam" id="TIGR00652">
    <property type="entry name" value="DapF"/>
    <property type="match status" value="1"/>
</dbReference>
<dbReference type="PANTHER" id="PTHR31689:SF0">
    <property type="entry name" value="DIAMINOPIMELATE EPIMERASE"/>
    <property type="match status" value="1"/>
</dbReference>
<dbReference type="PANTHER" id="PTHR31689">
    <property type="entry name" value="DIAMINOPIMELATE EPIMERASE, CHLOROPLASTIC"/>
    <property type="match status" value="1"/>
</dbReference>
<dbReference type="Pfam" id="PF01678">
    <property type="entry name" value="DAP_epimerase"/>
    <property type="match status" value="2"/>
</dbReference>
<dbReference type="SUPFAM" id="SSF54506">
    <property type="entry name" value="Diaminopimelate epimerase-like"/>
    <property type="match status" value="2"/>
</dbReference>
<dbReference type="PROSITE" id="PS01326">
    <property type="entry name" value="DAP_EPIMERASE"/>
    <property type="match status" value="1"/>
</dbReference>
<protein>
    <recommendedName>
        <fullName evidence="1">Diaminopimelate epimerase</fullName>
        <shortName evidence="1">DAP epimerase</shortName>
        <ecNumber evidence="1">5.1.1.7</ecNumber>
    </recommendedName>
    <alternativeName>
        <fullName evidence="1">PLP-independent amino acid racemase</fullName>
    </alternativeName>
</protein>
<proteinExistence type="inferred from homology"/>
<sequence>MISKINFVKMHGLGNDFVIVNKRDLSSSYDLSQLAKNMAERHTGIGCDQFIIYEEHNDFYEMIIYNIDGSSAKLCGNATRCLAKLIYLDTGKQDITVMVGNKKLLCNVNDENNISVNVGSVSFNEAWMPSRDKVWEFAERYMIDLKETICVDIGNPHVVIFSKLEPQDQKIVGERLQAKELFADGVNVNFAEVKDNKIYLSVWERGAGLTLACGSGACGSFAAGLKRGFIHSPSTIVFKHGNLTMKEENGNIIMQGAATLVARGEYYCEQ</sequence>
<accession>C4K2A3</accession>
<keyword id="KW-0028">Amino-acid biosynthesis</keyword>
<keyword id="KW-0963">Cytoplasm</keyword>
<keyword id="KW-0413">Isomerase</keyword>
<keyword id="KW-0457">Lysine biosynthesis</keyword>
<evidence type="ECO:0000255" key="1">
    <source>
        <dbReference type="HAMAP-Rule" id="MF_00197"/>
    </source>
</evidence>
<reference key="1">
    <citation type="journal article" date="2009" name="PLoS ONE">
        <title>Genome sequence of the endosymbiont Rickettsia peacockii and comparison with virulent Rickettsia rickettsii: identification of virulence factors.</title>
        <authorList>
            <person name="Felsheim R.F."/>
            <person name="Kurtti T.J."/>
            <person name="Munderloh U.G."/>
        </authorList>
    </citation>
    <scope>NUCLEOTIDE SEQUENCE [LARGE SCALE GENOMIC DNA]</scope>
    <source>
        <strain>Rustic</strain>
    </source>
</reference>